<reference key="1">
    <citation type="submission" date="1994-03" db="EMBL/GenBank/DDBJ databases">
        <authorList>
            <person name="Smith D.R."/>
            <person name="Robison K."/>
        </authorList>
    </citation>
    <scope>NUCLEOTIDE SEQUENCE [GENOMIC DNA]</scope>
</reference>
<reference key="2">
    <citation type="journal article" date="2001" name="Nature">
        <title>Massive gene decay in the leprosy bacillus.</title>
        <authorList>
            <person name="Cole S.T."/>
            <person name="Eiglmeier K."/>
            <person name="Parkhill J."/>
            <person name="James K.D."/>
            <person name="Thomson N.R."/>
            <person name="Wheeler P.R."/>
            <person name="Honore N."/>
            <person name="Garnier T."/>
            <person name="Churcher C.M."/>
            <person name="Harris D.E."/>
            <person name="Mungall K.L."/>
            <person name="Basham D."/>
            <person name="Brown D."/>
            <person name="Chillingworth T."/>
            <person name="Connor R."/>
            <person name="Davies R.M."/>
            <person name="Devlin K."/>
            <person name="Duthoy S."/>
            <person name="Feltwell T."/>
            <person name="Fraser A."/>
            <person name="Hamlin N."/>
            <person name="Holroyd S."/>
            <person name="Hornsby T."/>
            <person name="Jagels K."/>
            <person name="Lacroix C."/>
            <person name="Maclean J."/>
            <person name="Moule S."/>
            <person name="Murphy L.D."/>
            <person name="Oliver K."/>
            <person name="Quail M.A."/>
            <person name="Rajandream M.A."/>
            <person name="Rutherford K.M."/>
            <person name="Rutter S."/>
            <person name="Seeger K."/>
            <person name="Simon S."/>
            <person name="Simmonds M."/>
            <person name="Skelton J."/>
            <person name="Squares R."/>
            <person name="Squares S."/>
            <person name="Stevens K."/>
            <person name="Taylor K."/>
            <person name="Whitehead S."/>
            <person name="Woodward J.R."/>
            <person name="Barrell B.G."/>
        </authorList>
    </citation>
    <scope>NUCLEOTIDE SEQUENCE [LARGE SCALE GENOMIC DNA]</scope>
    <source>
        <strain>TN</strain>
    </source>
</reference>
<reference key="3">
    <citation type="journal article" date="1996" name="Plant Mol. Biol.">
        <title>Transaldolase genes from the cyanobacteria Anabaena variabilis and Synechocystis sp. PCC 6803: comparison with other eubacterial and eukaryotic homologues.</title>
        <authorList>
            <person name="Koehler U."/>
            <person name="Cerff R."/>
            <person name="Brinkmann H."/>
        </authorList>
    </citation>
    <scope>IDENTIFICATION</scope>
</reference>
<name>TAL_MYCLE</name>
<keyword id="KW-0963">Cytoplasm</keyword>
<keyword id="KW-0570">Pentose shunt</keyword>
<keyword id="KW-1185">Reference proteome</keyword>
<keyword id="KW-0704">Schiff base</keyword>
<keyword id="KW-0808">Transferase</keyword>
<gene>
    <name type="primary">tal</name>
    <name type="ordered locus">ML0582</name>
    <name type="ORF">B1496_F2_65/B1496_F1_27</name>
    <name type="ORF">MLCL536.39</name>
</gene>
<sequence length="375" mass="40588">MTSKIQNPNLAALSAAGVSVWLDDLSRDRLQSGNLQKLIDTKSVVGVTTNPSIFQKAFANGHAYDAQIAELAKRGANVDVTVRTVTTDDVRHACDVLACEWEASHGKDGRVSIEVDPRLAHDTDKTIAQAVELWRIVDHPNLFIKIPATKAGLPAITAVLAEGISVNVTLIFSVQRHREVIDAYLAGIEKAAEAGRDLSKIVSVASFFVSRVDTEIDKRLEKLGSEQALALRGQAGVANARLAYAAYQKAFEGGQRYQTLMARGAQVQRPLWASTGVKNPDYADTLYVTELVAPNTVNTMPETTIDAVADHGVIRGDTISGTTLSSQKVFDSLVAVGVDLIDVFAVLEHEGVQKFVKSWNELLKETQEQLDSVAK</sequence>
<feature type="chain" id="PRO_0000173635" description="Transaldolase">
    <location>
        <begin position="1"/>
        <end position="375"/>
    </location>
</feature>
<feature type="active site" description="Schiff-base intermediate with substrate" evidence="1">
    <location>
        <position position="145"/>
    </location>
</feature>
<feature type="sequence conflict" description="In Ref. 1." evidence="2" ref="1">
    <original>A</original>
    <variation>G</variation>
    <location>
        <position position="155"/>
    </location>
</feature>
<proteinExistence type="inferred from homology"/>
<dbReference type="EC" id="2.2.1.2"/>
<dbReference type="EMBL" id="U00013">
    <property type="protein sequence ID" value="AAA17145.1"/>
    <property type="status" value="ALT_FRAME"/>
    <property type="molecule type" value="Genomic_DNA"/>
</dbReference>
<dbReference type="EMBL" id="U00013">
    <property type="protein sequence ID" value="AAA17140.1"/>
    <property type="status" value="ALT_FRAME"/>
    <property type="molecule type" value="Genomic_DNA"/>
</dbReference>
<dbReference type="EMBL" id="Z99125">
    <property type="protein sequence ID" value="CAB16183.1"/>
    <property type="molecule type" value="Genomic_DNA"/>
</dbReference>
<dbReference type="EMBL" id="AL583919">
    <property type="protein sequence ID" value="CAC30090.1"/>
    <property type="molecule type" value="Genomic_DNA"/>
</dbReference>
<dbReference type="PIR" id="T11020">
    <property type="entry name" value="T11020"/>
</dbReference>
<dbReference type="RefSeq" id="NP_301493.1">
    <property type="nucleotide sequence ID" value="NC_002677.1"/>
</dbReference>
<dbReference type="RefSeq" id="WP_010907817.1">
    <property type="nucleotide sequence ID" value="NC_002677.1"/>
</dbReference>
<dbReference type="SMR" id="P55193"/>
<dbReference type="STRING" id="272631.gene:17574403"/>
<dbReference type="KEGG" id="mle:ML0582"/>
<dbReference type="PATRIC" id="fig|272631.5.peg.1016"/>
<dbReference type="Leproma" id="ML0582"/>
<dbReference type="eggNOG" id="COG0176">
    <property type="taxonomic scope" value="Bacteria"/>
</dbReference>
<dbReference type="HOGENOM" id="CLU_050771_1_0_11"/>
<dbReference type="OrthoDB" id="9809101at2"/>
<dbReference type="UniPathway" id="UPA00115">
    <property type="reaction ID" value="UER00414"/>
</dbReference>
<dbReference type="Proteomes" id="UP000000806">
    <property type="component" value="Chromosome"/>
</dbReference>
<dbReference type="GO" id="GO:0005737">
    <property type="term" value="C:cytoplasm"/>
    <property type="evidence" value="ECO:0007669"/>
    <property type="project" value="UniProtKB-SubCell"/>
</dbReference>
<dbReference type="GO" id="GO:0004801">
    <property type="term" value="F:transaldolase activity"/>
    <property type="evidence" value="ECO:0007669"/>
    <property type="project" value="UniProtKB-UniRule"/>
</dbReference>
<dbReference type="GO" id="GO:0005975">
    <property type="term" value="P:carbohydrate metabolic process"/>
    <property type="evidence" value="ECO:0007669"/>
    <property type="project" value="InterPro"/>
</dbReference>
<dbReference type="GO" id="GO:0006098">
    <property type="term" value="P:pentose-phosphate shunt"/>
    <property type="evidence" value="ECO:0007669"/>
    <property type="project" value="UniProtKB-UniRule"/>
</dbReference>
<dbReference type="CDD" id="cd00955">
    <property type="entry name" value="Transaldolase_like"/>
    <property type="match status" value="1"/>
</dbReference>
<dbReference type="Gene3D" id="3.20.20.70">
    <property type="entry name" value="Aldolase class I"/>
    <property type="match status" value="1"/>
</dbReference>
<dbReference type="HAMAP" id="MF_00493">
    <property type="entry name" value="Transaldolase_2"/>
    <property type="match status" value="1"/>
</dbReference>
<dbReference type="InterPro" id="IPR013785">
    <property type="entry name" value="Aldolase_TIM"/>
</dbReference>
<dbReference type="InterPro" id="IPR001585">
    <property type="entry name" value="TAL/FSA"/>
</dbReference>
<dbReference type="InterPro" id="IPR004732">
    <property type="entry name" value="Transaldolase_2"/>
</dbReference>
<dbReference type="InterPro" id="IPR018225">
    <property type="entry name" value="Transaldolase_AS"/>
</dbReference>
<dbReference type="NCBIfam" id="NF002881">
    <property type="entry name" value="PRK03343.1"/>
    <property type="match status" value="1"/>
</dbReference>
<dbReference type="NCBIfam" id="TIGR00876">
    <property type="entry name" value="tal_mycobact"/>
    <property type="match status" value="1"/>
</dbReference>
<dbReference type="PANTHER" id="PTHR10683">
    <property type="entry name" value="TRANSALDOLASE"/>
    <property type="match status" value="1"/>
</dbReference>
<dbReference type="PANTHER" id="PTHR10683:SF31">
    <property type="entry name" value="TRANSALDOLASE"/>
    <property type="match status" value="1"/>
</dbReference>
<dbReference type="Pfam" id="PF00923">
    <property type="entry name" value="TAL_FSA"/>
    <property type="match status" value="1"/>
</dbReference>
<dbReference type="PIRSF" id="PIRSF036915">
    <property type="entry name" value="Trnald_Bac_Plnt"/>
    <property type="match status" value="1"/>
</dbReference>
<dbReference type="SUPFAM" id="SSF51569">
    <property type="entry name" value="Aldolase"/>
    <property type="match status" value="1"/>
</dbReference>
<dbReference type="PROSITE" id="PS01054">
    <property type="entry name" value="TRANSALDOLASE_1"/>
    <property type="match status" value="1"/>
</dbReference>
<dbReference type="PROSITE" id="PS00958">
    <property type="entry name" value="TRANSALDOLASE_2"/>
    <property type="match status" value="1"/>
</dbReference>
<organism>
    <name type="scientific">Mycobacterium leprae (strain TN)</name>
    <dbReference type="NCBI Taxonomy" id="272631"/>
    <lineage>
        <taxon>Bacteria</taxon>
        <taxon>Bacillati</taxon>
        <taxon>Actinomycetota</taxon>
        <taxon>Actinomycetes</taxon>
        <taxon>Mycobacteriales</taxon>
        <taxon>Mycobacteriaceae</taxon>
        <taxon>Mycobacterium</taxon>
    </lineage>
</organism>
<comment type="function">
    <text evidence="1">Transaldolase is important for the balance of metabolites in the pentose-phosphate pathway.</text>
</comment>
<comment type="catalytic activity">
    <reaction>
        <text>D-sedoheptulose 7-phosphate + D-glyceraldehyde 3-phosphate = D-erythrose 4-phosphate + beta-D-fructose 6-phosphate</text>
        <dbReference type="Rhea" id="RHEA:17053"/>
        <dbReference type="ChEBI" id="CHEBI:16897"/>
        <dbReference type="ChEBI" id="CHEBI:57483"/>
        <dbReference type="ChEBI" id="CHEBI:57634"/>
        <dbReference type="ChEBI" id="CHEBI:59776"/>
        <dbReference type="EC" id="2.2.1.2"/>
    </reaction>
</comment>
<comment type="pathway">
    <text>Carbohydrate degradation; pentose phosphate pathway; D-glyceraldehyde 3-phosphate and beta-D-fructose 6-phosphate from D-ribose 5-phosphate and D-xylulose 5-phosphate (non-oxidative stage): step 2/3.</text>
</comment>
<comment type="subcellular location">
    <subcellularLocation>
        <location evidence="1">Cytoplasm</location>
    </subcellularLocation>
</comment>
<comment type="similarity">
    <text evidence="2">Belongs to the transaldolase family. Type 2 subfamily.</text>
</comment>
<comment type="sequence caution" evidence="2">
    <conflict type="frameshift">
        <sequence resource="EMBL-CDS" id="AAA17140"/>
    </conflict>
</comment>
<protein>
    <recommendedName>
        <fullName>Transaldolase</fullName>
        <ecNumber>2.2.1.2</ecNumber>
    </recommendedName>
</protein>
<accession>P55193</accession>
<accession>O65930</accession>
<accession>Q49698</accession>
<accession>Q49705</accession>
<evidence type="ECO:0000250" key="1"/>
<evidence type="ECO:0000305" key="2"/>